<reference key="1">
    <citation type="journal article" date="2006" name="BMC Genomics">
        <title>Complete genome sequence of Shigella flexneri 5b and comparison with Shigella flexneri 2a.</title>
        <authorList>
            <person name="Nie H."/>
            <person name="Yang F."/>
            <person name="Zhang X."/>
            <person name="Yang J."/>
            <person name="Chen L."/>
            <person name="Wang J."/>
            <person name="Xiong Z."/>
            <person name="Peng J."/>
            <person name="Sun L."/>
            <person name="Dong J."/>
            <person name="Xue Y."/>
            <person name="Xu X."/>
            <person name="Chen S."/>
            <person name="Yao Z."/>
            <person name="Shen Y."/>
            <person name="Jin Q."/>
        </authorList>
    </citation>
    <scope>NUCLEOTIDE SEQUENCE [LARGE SCALE GENOMIC DNA]</scope>
    <source>
        <strain>8401</strain>
    </source>
</reference>
<evidence type="ECO:0000250" key="1">
    <source>
        <dbReference type="UniProtKB" id="P0AG80"/>
    </source>
</evidence>
<evidence type="ECO:0000255" key="2"/>
<evidence type="ECO:0000305" key="3"/>
<protein>
    <recommendedName>
        <fullName evidence="1">sn-glycerol-3-phosphate-binding periplasmic protein UgpB</fullName>
    </recommendedName>
</protein>
<proteinExistence type="inferred from homology"/>
<keyword id="KW-0574">Periplasm</keyword>
<keyword id="KW-0732">Signal</keyword>
<keyword id="KW-0813">Transport</keyword>
<feature type="signal peptide" evidence="2">
    <location>
        <begin position="1"/>
        <end position="23"/>
    </location>
</feature>
<feature type="chain" id="PRO_0000292818" description="sn-glycerol-3-phosphate-binding periplasmic protein UgpB">
    <location>
        <begin position="24"/>
        <end position="438"/>
    </location>
</feature>
<feature type="binding site" evidence="1">
    <location>
        <position position="65"/>
    </location>
    <ligand>
        <name>sn-glycerol 3-phosphate</name>
        <dbReference type="ChEBI" id="CHEBI:57597"/>
    </ligand>
</feature>
<feature type="binding site" evidence="1">
    <location>
        <position position="89"/>
    </location>
    <ligand>
        <name>sn-glycerol 3-phosphate</name>
        <dbReference type="ChEBI" id="CHEBI:57597"/>
    </ligand>
</feature>
<feature type="binding site" evidence="1">
    <location>
        <position position="144"/>
    </location>
    <ligand>
        <name>sn-glycerol 3-phosphate</name>
        <dbReference type="ChEBI" id="CHEBI:57597"/>
    </ligand>
</feature>
<feature type="binding site" evidence="1">
    <location>
        <position position="270"/>
    </location>
    <ligand>
        <name>sn-glycerol 3-phosphate</name>
        <dbReference type="ChEBI" id="CHEBI:57597"/>
    </ligand>
</feature>
<feature type="binding site" evidence="1">
    <location>
        <position position="307"/>
    </location>
    <ligand>
        <name>sn-glycerol 3-phosphate</name>
        <dbReference type="ChEBI" id="CHEBI:57597"/>
    </ligand>
</feature>
<feature type="binding site" evidence="1">
    <location>
        <position position="346"/>
    </location>
    <ligand>
        <name>sn-glycerol 3-phosphate</name>
        <dbReference type="ChEBI" id="CHEBI:57597"/>
    </ligand>
</feature>
<feature type="binding site" evidence="1">
    <location>
        <position position="397"/>
    </location>
    <ligand>
        <name>sn-glycerol 3-phosphate</name>
        <dbReference type="ChEBI" id="CHEBI:57597"/>
    </ligand>
</feature>
<comment type="function">
    <text evidence="1">Part of the ABC transporter complex UgpBAEC involved in sn-glycerol-3-phosphate (G3P) import. Binds G3P.</text>
</comment>
<comment type="subunit">
    <text evidence="1">The complex is composed of two ATP-binding proteins (UgpC), two transmembrane proteins (UgpA and UgpE) and a solute-binding protein (UgpB).</text>
</comment>
<comment type="subcellular location">
    <subcellularLocation>
        <location evidence="1">Periplasm</location>
    </subcellularLocation>
</comment>
<comment type="similarity">
    <text evidence="3">Belongs to the bacterial solute-binding protein 1 family.</text>
</comment>
<organism>
    <name type="scientific">Shigella flexneri serotype 5b (strain 8401)</name>
    <dbReference type="NCBI Taxonomy" id="373384"/>
    <lineage>
        <taxon>Bacteria</taxon>
        <taxon>Pseudomonadati</taxon>
        <taxon>Pseudomonadota</taxon>
        <taxon>Gammaproteobacteria</taxon>
        <taxon>Enterobacterales</taxon>
        <taxon>Enterobacteriaceae</taxon>
        <taxon>Shigella</taxon>
    </lineage>
</organism>
<accession>Q0SZL9</accession>
<sequence length="438" mass="48447">MKPLHYTASALALGLALMGNAQAVTTIPFWHSMEGELGKEVDSLAQRFNAENPDYKIVPTYKGNYEQNLSAGIAAFRTGNAPAILQVYEVGTATMMASKAIKPVYDVFKEAGIQFDESQFVPTVSGYYSDSKTGHLLSQPFNSSTPVLYYNKDAFKKAGLDPEQPPKTWQDLADYSAKLKASGIKCGYASGWQGWIQLENFSAWNGLPFASKNNGFDGTDAVLEFNKPEQVKHIAMLEEMNKKGDFSYVGRKDESTEKFYNGDCAMTTASSGSLANIREYAKFNYGVGMMPYDADAKDAPQNAIIGGASLWVMQGKDKETYTGVAKFLDFLAKPENAAEWHQKTGYLPITKAAYDLTREQGFYEKNPGADTATRQMLNKPPLPFTKGLRLGNMPQIRVIVDEELESVWTGKKTPQQALDTAVERGNQLLRRFEKSTKS</sequence>
<dbReference type="EMBL" id="CP000266">
    <property type="protein sequence ID" value="ABF05496.1"/>
    <property type="molecule type" value="Genomic_DNA"/>
</dbReference>
<dbReference type="RefSeq" id="WP_000803201.1">
    <property type="nucleotide sequence ID" value="NC_008258.1"/>
</dbReference>
<dbReference type="SMR" id="Q0SZL9"/>
<dbReference type="KEGG" id="sfv:SFV_3456"/>
<dbReference type="HOGENOM" id="CLU_031285_3_0_6"/>
<dbReference type="Proteomes" id="UP000000659">
    <property type="component" value="Chromosome"/>
</dbReference>
<dbReference type="GO" id="GO:0030288">
    <property type="term" value="C:outer membrane-bounded periplasmic space"/>
    <property type="evidence" value="ECO:0007669"/>
    <property type="project" value="UniProtKB-ARBA"/>
</dbReference>
<dbReference type="GO" id="GO:0055085">
    <property type="term" value="P:transmembrane transport"/>
    <property type="evidence" value="ECO:0007669"/>
    <property type="project" value="InterPro"/>
</dbReference>
<dbReference type="CDD" id="cd14748">
    <property type="entry name" value="PBP2_UgpB"/>
    <property type="match status" value="1"/>
</dbReference>
<dbReference type="Gene3D" id="3.40.190.10">
    <property type="entry name" value="Periplasmic binding protein-like II"/>
    <property type="match status" value="2"/>
</dbReference>
<dbReference type="InterPro" id="IPR050490">
    <property type="entry name" value="Bact_solute-bd_prot1"/>
</dbReference>
<dbReference type="InterPro" id="IPR006059">
    <property type="entry name" value="SBP"/>
</dbReference>
<dbReference type="InterPro" id="IPR006061">
    <property type="entry name" value="SBP_1_CS"/>
</dbReference>
<dbReference type="NCBIfam" id="NF008211">
    <property type="entry name" value="PRK10974.1"/>
    <property type="match status" value="1"/>
</dbReference>
<dbReference type="PANTHER" id="PTHR43649">
    <property type="entry name" value="ARABINOSE-BINDING PROTEIN-RELATED"/>
    <property type="match status" value="1"/>
</dbReference>
<dbReference type="PANTHER" id="PTHR43649:SF31">
    <property type="entry name" value="SN-GLYCEROL-3-PHOSPHATE-BINDING PERIPLASMIC PROTEIN UGPB"/>
    <property type="match status" value="1"/>
</dbReference>
<dbReference type="Pfam" id="PF13416">
    <property type="entry name" value="SBP_bac_8"/>
    <property type="match status" value="1"/>
</dbReference>
<dbReference type="SUPFAM" id="SSF53850">
    <property type="entry name" value="Periplasmic binding protein-like II"/>
    <property type="match status" value="1"/>
</dbReference>
<dbReference type="PROSITE" id="PS01037">
    <property type="entry name" value="SBP_BACTERIAL_1"/>
    <property type="match status" value="1"/>
</dbReference>
<name>UGPB_SHIF8</name>
<gene>
    <name type="primary">ugpB</name>
    <name type="ordered locus">SFV_3456</name>
</gene>